<dbReference type="EMBL" id="AF133832">
    <property type="protein sequence ID" value="AAD32265.1"/>
    <property type="molecule type" value="mRNA"/>
</dbReference>
<dbReference type="EMBL" id="FO080456">
    <property type="protein sequence ID" value="CCD63843.2"/>
    <property type="molecule type" value="Genomic_DNA"/>
</dbReference>
<dbReference type="EMBL" id="FO080456">
    <property type="protein sequence ID" value="CCD63844.2"/>
    <property type="molecule type" value="Genomic_DNA"/>
</dbReference>
<dbReference type="EMBL" id="AF080583">
    <property type="protein sequence ID" value="AAC31574.1"/>
    <property type="molecule type" value="mRNA"/>
</dbReference>
<dbReference type="PIR" id="T43338">
    <property type="entry name" value="T43338"/>
</dbReference>
<dbReference type="RefSeq" id="NP_509339.4">
    <molecule id="Q09969-1"/>
    <property type="nucleotide sequence ID" value="NM_076938.4"/>
</dbReference>
<dbReference type="RefSeq" id="NP_509340.2">
    <molecule id="Q09969-2"/>
    <property type="nucleotide sequence ID" value="NM_076939.5"/>
</dbReference>
<dbReference type="BioGRID" id="45977">
    <property type="interactions" value="5"/>
</dbReference>
<dbReference type="DIP" id="DIP-26299N"/>
<dbReference type="FunCoup" id="Q09969">
    <property type="interactions" value="129"/>
</dbReference>
<dbReference type="STRING" id="6239.C14F5.1a.1"/>
<dbReference type="TCDB" id="1.A.20.2.1">
    <property type="family name" value="the bcl2/adenovirus e1b-interacting protein 3 (bnip3) family"/>
</dbReference>
<dbReference type="iPTMnet" id="Q09969"/>
<dbReference type="PaxDb" id="6239-C14F5.1a"/>
<dbReference type="PeptideAtlas" id="Q09969"/>
<dbReference type="EnsemblMetazoa" id="C14F5.1a.1">
    <molecule id="Q09969-1"/>
    <property type="protein sequence ID" value="C14F5.1a.1"/>
    <property type="gene ID" value="WBGene00015776"/>
</dbReference>
<dbReference type="EnsemblMetazoa" id="C14F5.1b.1">
    <molecule id="Q09969-2"/>
    <property type="protein sequence ID" value="C14F5.1b.1"/>
    <property type="gene ID" value="WBGene00015776"/>
</dbReference>
<dbReference type="GeneID" id="181053"/>
<dbReference type="KEGG" id="cel:CELE_C14F5.1"/>
<dbReference type="UCSC" id="C14F5.1a">
    <property type="organism name" value="c. elegans"/>
</dbReference>
<dbReference type="AGR" id="WB:WBGene00015776"/>
<dbReference type="CTD" id="181053"/>
<dbReference type="WormBase" id="C14F5.1a">
    <molecule id="Q09969-1"/>
    <property type="protein sequence ID" value="CE47388"/>
    <property type="gene ID" value="WBGene00015776"/>
    <property type="gene designation" value="dct-1"/>
</dbReference>
<dbReference type="WormBase" id="C14F5.1b">
    <molecule id="Q09969-2"/>
    <property type="protein sequence ID" value="CE47263"/>
    <property type="gene ID" value="WBGene00015776"/>
    <property type="gene designation" value="dct-1"/>
</dbReference>
<dbReference type="eggNOG" id="ENOG502SF13">
    <property type="taxonomic scope" value="Eukaryota"/>
</dbReference>
<dbReference type="GeneTree" id="ENSGT00390000013415"/>
<dbReference type="HOGENOM" id="CLU_1251645_0_0_1"/>
<dbReference type="InParanoid" id="Q09969"/>
<dbReference type="OMA" id="MSESWVE"/>
<dbReference type="OrthoDB" id="5857140at2759"/>
<dbReference type="PRO" id="PR:Q09969"/>
<dbReference type="Proteomes" id="UP000001940">
    <property type="component" value="Chromosome X"/>
</dbReference>
<dbReference type="Bgee" id="WBGene00015776">
    <property type="expression patterns" value="Expressed in pharyngeal muscle cell (C elegans) and 3 other cell types or tissues"/>
</dbReference>
<dbReference type="GO" id="GO:0031966">
    <property type="term" value="C:mitochondrial membrane"/>
    <property type="evidence" value="ECO:0000314"/>
    <property type="project" value="UniProtKB"/>
</dbReference>
<dbReference type="GO" id="GO:0005741">
    <property type="term" value="C:mitochondrial outer membrane"/>
    <property type="evidence" value="ECO:0000314"/>
    <property type="project" value="WormBase"/>
</dbReference>
<dbReference type="GO" id="GO:0005634">
    <property type="term" value="C:nucleus"/>
    <property type="evidence" value="ECO:0000318"/>
    <property type="project" value="GO_Central"/>
</dbReference>
<dbReference type="GO" id="GO:0032991">
    <property type="term" value="C:protein-containing complex"/>
    <property type="evidence" value="ECO:0000353"/>
    <property type="project" value="WormBase"/>
</dbReference>
<dbReference type="GO" id="GO:0002020">
    <property type="term" value="F:protease binding"/>
    <property type="evidence" value="ECO:0000353"/>
    <property type="project" value="UniProtKB"/>
</dbReference>
<dbReference type="GO" id="GO:0042803">
    <property type="term" value="F:protein homodimerization activity"/>
    <property type="evidence" value="ECO:0000314"/>
    <property type="project" value="UniProtKB"/>
</dbReference>
<dbReference type="GO" id="GO:0006915">
    <property type="term" value="P:apoptotic process"/>
    <property type="evidence" value="ECO:0000315"/>
    <property type="project" value="UniProtKB"/>
</dbReference>
<dbReference type="GO" id="GO:0008340">
    <property type="term" value="P:determination of adult lifespan"/>
    <property type="evidence" value="ECO:0000315"/>
    <property type="project" value="UniProtKB"/>
</dbReference>
<dbReference type="GO" id="GO:0097345">
    <property type="term" value="P:mitochondrial outer membrane permeabilization"/>
    <property type="evidence" value="ECO:0000318"/>
    <property type="project" value="GO_Central"/>
</dbReference>
<dbReference type="GO" id="GO:0000423">
    <property type="term" value="P:mitophagy"/>
    <property type="evidence" value="ECO:0000315"/>
    <property type="project" value="WormBase"/>
</dbReference>
<dbReference type="GO" id="GO:0043065">
    <property type="term" value="P:positive regulation of apoptotic process"/>
    <property type="evidence" value="ECO:0007669"/>
    <property type="project" value="InterPro"/>
</dbReference>
<dbReference type="GO" id="GO:0051726">
    <property type="term" value="P:regulation of cell cycle"/>
    <property type="evidence" value="ECO:0000316"/>
    <property type="project" value="UniProtKB"/>
</dbReference>
<dbReference type="GO" id="GO:0043067">
    <property type="term" value="P:regulation of programmed cell death"/>
    <property type="evidence" value="ECO:0000318"/>
    <property type="project" value="GO_Central"/>
</dbReference>
<dbReference type="InterPro" id="IPR010548">
    <property type="entry name" value="BNIP3"/>
</dbReference>
<dbReference type="PANTHER" id="PTHR15186:SF5">
    <property type="entry name" value="BNIP3, ISOFORM A"/>
    <property type="match status" value="1"/>
</dbReference>
<dbReference type="PANTHER" id="PTHR15186">
    <property type="entry name" value="RE48077P"/>
    <property type="match status" value="1"/>
</dbReference>
<dbReference type="Pfam" id="PF06553">
    <property type="entry name" value="BNIP3"/>
    <property type="match status" value="1"/>
</dbReference>
<feature type="chain" id="PRO_0000064963" description="NIP3 homolog">
    <location>
        <begin position="1"/>
        <end position="221"/>
    </location>
</feature>
<feature type="transmembrane region" description="Helical" evidence="1">
    <location>
        <begin position="189"/>
        <end position="209"/>
    </location>
</feature>
<feature type="region of interest" description="Disordered" evidence="2">
    <location>
        <begin position="24"/>
        <end position="55"/>
    </location>
</feature>
<feature type="region of interest" description="Required for initiation of apoptosis">
    <location>
        <begin position="189"/>
        <end position="209"/>
    </location>
</feature>
<feature type="compositionally biased region" description="Low complexity" evidence="2">
    <location>
        <begin position="32"/>
        <end position="49"/>
    </location>
</feature>
<feature type="cross-link" description="Glycyl lysine isopeptide (Lys-Gly) (interchain with G-Cter in ubiquitin)" evidence="6">
    <location>
        <position position="26"/>
    </location>
</feature>
<feature type="splice variant" id="VSP_037301" description="In isoform b." evidence="8">
    <location>
        <begin position="66"/>
        <end position="68"/>
    </location>
</feature>
<name>BNIP3_CAEEL</name>
<accession>Q09969</accession>
<accession>Q95QW5</accession>
<accession>Q9UB15</accession>
<sequence>MSSFLEFAKPKMLDIKRKINFASGEKTDESVQPQQQTEQSSAQQTTPSAKAVSNPFITPLTESTPGMSESWVELAPSRTSLCSSVDINMVIIDEKDKDSRLSPVSIAQSPHVEFESLEQVKYKLVREMLPPGKNTDWIWDWSSRPENTPPKTVRMVQYGSNLTTPPNSPEPELYQYLPCESDSLFNVRVVFGFLVTNIFSFVVGAAVGFAVCRKLIKHHRQ</sequence>
<proteinExistence type="evidence at protein level"/>
<keyword id="KW-0025">Alternative splicing</keyword>
<keyword id="KW-0053">Apoptosis</keyword>
<keyword id="KW-0072">Autophagy</keyword>
<keyword id="KW-1017">Isopeptide bond</keyword>
<keyword id="KW-0472">Membrane</keyword>
<keyword id="KW-0496">Mitochondrion</keyword>
<keyword id="KW-1000">Mitochondrion outer membrane</keyword>
<keyword id="KW-1185">Reference proteome</keyword>
<keyword id="KW-0812">Transmembrane</keyword>
<keyword id="KW-1133">Transmembrane helix</keyword>
<keyword id="KW-0832">Ubl conjugation</keyword>
<gene>
    <name evidence="9" type="primary">dct-1</name>
    <name evidence="9" type="ORF">C14F5.1</name>
</gene>
<reference key="1">
    <citation type="journal article" date="2000" name="Oncogene">
        <title>The C. elegans orthologue ceBNIP3 interacts with CED-9 and CED-3 but kills through a BH3- and caspase-independent mechanism.</title>
        <authorList>
            <person name="Cizeau J."/>
            <person name="Ray R."/>
            <person name="Chen G."/>
            <person name="Gietz R.D."/>
            <person name="Greenberg A.H."/>
        </authorList>
    </citation>
    <scope>NUCLEOTIDE SEQUENCE [MRNA] (ISOFORM A)</scope>
    <scope>FUNCTION</scope>
    <scope>HOMODIMER</scope>
    <scope>SUBCELLULAR LOCATION</scope>
    <scope>INTERACTION WITH CED-3 AND CED-9</scope>
    <scope>UBIQUITINATION</scope>
    <scope>PROTEASOMAL DEGRADATION</scope>
</reference>
<reference key="2">
    <citation type="journal article" date="1998" name="Science">
        <title>Genome sequence of the nematode C. elegans: a platform for investigating biology.</title>
        <authorList>
            <consortium name="The C. elegans sequencing consortium"/>
        </authorList>
    </citation>
    <scope>NUCLEOTIDE SEQUENCE [LARGE SCALE GENOMIC DNA]</scope>
    <source>
        <strain>Bristol N2</strain>
    </source>
</reference>
<reference key="3">
    <citation type="journal article" date="1998" name="Oncogene">
        <title>Regulation of apoptosis by a Caenorhabditis elegans BNIP3 homolog.</title>
        <authorList>
            <person name="Yasuda M."/>
            <person name="D'Sa-Eipper C."/>
            <person name="Gong X.L."/>
            <person name="Chinnadurai G."/>
        </authorList>
    </citation>
    <scope>NUCLEOTIDE SEQUENCE [MRNA] OF 12-221 (ISOFORM A)</scope>
    <scope>INTERACTION WITH CED-3 AND CED-9</scope>
</reference>
<reference key="4">
    <citation type="journal article" date="2006" name="Nat. Genet.">
        <title>Identification of direct DAF-16 targets controlling longevity, metabolism and diapause by chromatin immunoprecipitation.</title>
        <authorList>
            <person name="Oh S.W."/>
            <person name="Mukhopadhyay A."/>
            <person name="Dixit B.L."/>
            <person name="Raha T."/>
            <person name="Green M.R."/>
            <person name="Tissenbaum H.A."/>
        </authorList>
    </citation>
    <scope>FUNCTION</scope>
</reference>
<reference key="5">
    <citation type="journal article" date="2007" name="Nat. Genet.">
        <title>DAF-16/FOXO targets genes that regulate tumor growth in Caenorhabditis elegans.</title>
        <authorList>
            <person name="Pinkston-Gosse J."/>
            <person name="Kenyon C."/>
        </authorList>
    </citation>
    <scope>FUNCTION</scope>
</reference>
<reference key="6">
    <citation type="journal article" date="2015" name="Nature">
        <title>Coordination of mitophagy and mitochondrial biogenesis during ageing in C. elegans.</title>
        <authorList>
            <person name="Palikaras K."/>
            <person name="Lionaki E."/>
            <person name="Tavernarakis N."/>
        </authorList>
    </citation>
    <scope>FUNCTION</scope>
    <scope>SUBCELLULAR LOCATION</scope>
    <scope>TISSUE SPECIFICITY</scope>
    <scope>DEVELOPMENTAL STAGE</scope>
    <scope>UBIQUITINATION AT LYS-26</scope>
    <scope>DISRUPTION PHENOTYPE</scope>
</reference>
<protein>
    <recommendedName>
        <fullName>NIP3 homolog</fullName>
        <shortName>CeBNIP3</shortName>
    </recommendedName>
    <alternativeName>
        <fullName evidence="9">Daf-16/FOXO controlled germline tumor affecting-1</fullName>
    </alternativeName>
</protein>
<comment type="function">
    <text evidence="3 4 5 6">Initiates apoptosis in a BH3-independent mechanism possibly by recruiting ced-3 to mitochondria and other cytoplasmic membranes (PubMed:11114722). Has a role in lifespan and tumor growth (PubMed:16380712, PubMed:17934462). Required for the induction of mitophagy under stress conditions (PubMed:25896323).</text>
</comment>
<comment type="subunit">
    <text evidence="3 7">Homodimer; via transmembrane domain (PubMed:11114722, PubMed:9824163). Interacts with ced-3 and ced-9 (PubMed:9824163).</text>
</comment>
<comment type="subcellular location">
    <subcellularLocation>
        <location evidence="6">Mitochondrion outer membrane</location>
        <topology evidence="8">Single-pass membrane protein</topology>
    </subcellularLocation>
</comment>
<comment type="alternative products">
    <event type="alternative splicing"/>
    <isoform>
        <id>Q09969-1</id>
        <name>a</name>
        <sequence type="displayed"/>
    </isoform>
    <isoform>
        <id>Q09969-2</id>
        <name>b</name>
        <sequence type="described" ref="VSP_037301"/>
    </isoform>
</comment>
<comment type="tissue specificity">
    <text evidence="6">Expressed in all somatic tissues including neurons, pharynx, intestine, body wall muscles and vulva muscles.</text>
</comment>
<comment type="developmental stage">
    <text evidence="6">Expressed in the embryo and throughout all stages of development to adulthood.</text>
</comment>
<comment type="PTM">
    <text evidence="3 6">Ubiquitinated and degraded by the proteasome (PubMed:11114722). Under oxidative stress conditions, ubiquitinated at Lys-26 in a pink-1 dependent manner. Colocalizes with pdr-1 and may be ubiquitinated by it (PubMed:25896323).</text>
</comment>
<comment type="disruption phenotype">
    <text evidence="6">RNAi-mediated knockdown causes an increased sensitivity to stress and inhibits mitophagy which leads to an accumulation of defective mitochondria that have increased mass, altered network morphology, decreased ATP levels, increased reactive oxygen species (ROS) generation, membrane depolarization, increased oxygen consumption and increased cytoplasmic Ca(2+) that intensifies under stress conditions. RNAi-mediated knockdown in daf-2, isp-1, or clk-1 mutant backgrounds suppresses their increased lifespan phenotype.</text>
</comment>
<comment type="similarity">
    <text evidence="8">Belongs to the NIP3 family.</text>
</comment>
<organism>
    <name type="scientific">Caenorhabditis elegans</name>
    <dbReference type="NCBI Taxonomy" id="6239"/>
    <lineage>
        <taxon>Eukaryota</taxon>
        <taxon>Metazoa</taxon>
        <taxon>Ecdysozoa</taxon>
        <taxon>Nematoda</taxon>
        <taxon>Chromadorea</taxon>
        <taxon>Rhabditida</taxon>
        <taxon>Rhabditina</taxon>
        <taxon>Rhabditomorpha</taxon>
        <taxon>Rhabditoidea</taxon>
        <taxon>Rhabditidae</taxon>
        <taxon>Peloderinae</taxon>
        <taxon>Caenorhabditis</taxon>
    </lineage>
</organism>
<evidence type="ECO:0000255" key="1"/>
<evidence type="ECO:0000256" key="2">
    <source>
        <dbReference type="SAM" id="MobiDB-lite"/>
    </source>
</evidence>
<evidence type="ECO:0000269" key="3">
    <source>
    </source>
</evidence>
<evidence type="ECO:0000269" key="4">
    <source>
    </source>
</evidence>
<evidence type="ECO:0000269" key="5">
    <source>
    </source>
</evidence>
<evidence type="ECO:0000269" key="6">
    <source>
    </source>
</evidence>
<evidence type="ECO:0000269" key="7">
    <source>
    </source>
</evidence>
<evidence type="ECO:0000305" key="8"/>
<evidence type="ECO:0000312" key="9">
    <source>
        <dbReference type="WormBase" id="C14F5.1a"/>
    </source>
</evidence>